<accession>P85489</accession>
<reference evidence="3" key="1">
    <citation type="journal article" date="2009" name="J. Plant Physiol.">
        <title>Analysis of the soluble cell wall proteome of gymnosperms.</title>
        <authorList>
            <person name="Uzal E.N."/>
            <person name="Gomez-Ros L.V."/>
            <person name="Hernandez J.A."/>
            <person name="Pedreno M.A."/>
            <person name="Cuello J."/>
            <person name="Ros Barcelo A."/>
        </authorList>
    </citation>
    <scope>PROTEIN SEQUENCE</scope>
    <scope>SUBCELLULAR LOCATION</scope>
    <source>
        <strain evidence="1">PC-801</strain>
        <tissue evidence="1">Callus</tissue>
    </source>
</reference>
<protein>
    <recommendedName>
        <fullName>Unknown protein 5</fullName>
    </recommendedName>
</protein>
<dbReference type="GO" id="GO:0005576">
    <property type="term" value="C:extracellular region"/>
    <property type="evidence" value="ECO:0007669"/>
    <property type="project" value="UniProtKB-KW"/>
</dbReference>
<sequence>LRCTFGRTVK</sequence>
<feature type="chain" id="PRO_0000326447" description="Unknown protein 5">
    <location>
        <begin position="1" status="less than"/>
        <end position="10" status="greater than"/>
    </location>
</feature>
<feature type="unsure residue" description="L or I">
    <location>
        <position position="1"/>
    </location>
</feature>
<feature type="unsure residue" description="K or Q">
    <location>
        <position position="10"/>
    </location>
</feature>
<feature type="non-terminal residue" evidence="2">
    <location>
        <position position="1"/>
    </location>
</feature>
<feature type="non-terminal residue" evidence="2">
    <location>
        <position position="10"/>
    </location>
</feature>
<evidence type="ECO:0000269" key="1">
    <source>
    </source>
</evidence>
<evidence type="ECO:0000303" key="2">
    <source>
    </source>
</evidence>
<evidence type="ECO:0000305" key="3"/>
<keyword id="KW-0134">Cell wall</keyword>
<keyword id="KW-0903">Direct protein sequencing</keyword>
<keyword id="KW-0964">Secreted</keyword>
<comment type="subcellular location">
    <subcellularLocation>
        <location evidence="1">Secreted</location>
        <location evidence="1">Cell wall</location>
    </subcellularLocation>
</comment>
<proteinExistence type="evidence at protein level"/>
<organism>
    <name type="scientific">Pinus halepensis</name>
    <name type="common">Aleppo pine</name>
    <dbReference type="NCBI Taxonomy" id="71633"/>
    <lineage>
        <taxon>Eukaryota</taxon>
        <taxon>Viridiplantae</taxon>
        <taxon>Streptophyta</taxon>
        <taxon>Embryophyta</taxon>
        <taxon>Tracheophyta</taxon>
        <taxon>Spermatophyta</taxon>
        <taxon>Pinopsida</taxon>
        <taxon>Pinidae</taxon>
        <taxon>Conifers I</taxon>
        <taxon>Pinales</taxon>
        <taxon>Pinaceae</taxon>
        <taxon>Pinus</taxon>
        <taxon>Pinus subgen. Pinus</taxon>
    </lineage>
</organism>
<name>UP05_PINHA</name>